<protein>
    <recommendedName>
        <fullName evidence="4">Probable autolysin PH</fullName>
        <ecNumber evidence="3">3.5.1.28</ecNumber>
    </recommendedName>
</protein>
<organism>
    <name type="scientific">Staphylococcus aureus (strain NCTC 8325 / PS 47)</name>
    <dbReference type="NCBI Taxonomy" id="93061"/>
    <lineage>
        <taxon>Bacteria</taxon>
        <taxon>Bacillati</taxon>
        <taxon>Bacillota</taxon>
        <taxon>Bacilli</taxon>
        <taxon>Bacillales</taxon>
        <taxon>Staphylococcaceae</taxon>
        <taxon>Staphylococcus</taxon>
    </lineage>
</organism>
<dbReference type="EC" id="3.5.1.28" evidence="3"/>
<dbReference type="EMBL" id="CP000253">
    <property type="protein sequence ID" value="ABD30597.1"/>
    <property type="molecule type" value="Genomic_DNA"/>
</dbReference>
<dbReference type="RefSeq" id="WP_000909202.1">
    <property type="nucleotide sequence ID" value="NZ_LS483365.1"/>
</dbReference>
<dbReference type="RefSeq" id="YP_500032.1">
    <property type="nucleotide sequence ID" value="NC_007795.1"/>
</dbReference>
<dbReference type="SMR" id="Q2FYD8"/>
<dbReference type="STRING" id="93061.SAOUHSC_01515"/>
<dbReference type="MEROPS" id="C51.001"/>
<dbReference type="PaxDb" id="1280-SAXN108_0369"/>
<dbReference type="GeneID" id="3919056"/>
<dbReference type="KEGG" id="sao:SAOUHSC_01515"/>
<dbReference type="PATRIC" id="fig|93061.5.peg.1378"/>
<dbReference type="eggNOG" id="COG0860">
    <property type="taxonomic scope" value="Bacteria"/>
</dbReference>
<dbReference type="eggNOG" id="COG1388">
    <property type="taxonomic scope" value="Bacteria"/>
</dbReference>
<dbReference type="HOGENOM" id="CLU_046701_0_0_9"/>
<dbReference type="OrthoDB" id="2195319at2"/>
<dbReference type="Proteomes" id="UP000008816">
    <property type="component" value="Chromosome"/>
</dbReference>
<dbReference type="GO" id="GO:0030288">
    <property type="term" value="C:outer membrane-bounded periplasmic space"/>
    <property type="evidence" value="ECO:0000318"/>
    <property type="project" value="GO_Central"/>
</dbReference>
<dbReference type="GO" id="GO:0008745">
    <property type="term" value="F:N-acetylmuramoyl-L-alanine amidase activity"/>
    <property type="evidence" value="ECO:0000318"/>
    <property type="project" value="GO_Central"/>
</dbReference>
<dbReference type="GO" id="GO:0071555">
    <property type="term" value="P:cell wall organization"/>
    <property type="evidence" value="ECO:0007669"/>
    <property type="project" value="UniProtKB-KW"/>
</dbReference>
<dbReference type="GO" id="GO:0042742">
    <property type="term" value="P:defense response to bacterium"/>
    <property type="evidence" value="ECO:0007669"/>
    <property type="project" value="UniProtKB-KW"/>
</dbReference>
<dbReference type="GO" id="GO:0043093">
    <property type="term" value="P:FtsZ-dependent cytokinesis"/>
    <property type="evidence" value="ECO:0000318"/>
    <property type="project" value="GO_Central"/>
</dbReference>
<dbReference type="GO" id="GO:0031640">
    <property type="term" value="P:killing of cells of another organism"/>
    <property type="evidence" value="ECO:0007669"/>
    <property type="project" value="UniProtKB-KW"/>
</dbReference>
<dbReference type="GO" id="GO:0009253">
    <property type="term" value="P:peptidoglycan catabolic process"/>
    <property type="evidence" value="ECO:0007669"/>
    <property type="project" value="InterPro"/>
</dbReference>
<dbReference type="CDD" id="cd02696">
    <property type="entry name" value="MurNAc-LAA"/>
    <property type="match status" value="1"/>
</dbReference>
<dbReference type="FunFam" id="3.40.630.40:FF:000006">
    <property type="entry name" value="Amidase"/>
    <property type="match status" value="1"/>
</dbReference>
<dbReference type="FunFam" id="3.90.1720.10:FF:000005">
    <property type="entry name" value="Amidase"/>
    <property type="match status" value="1"/>
</dbReference>
<dbReference type="Gene3D" id="3.90.1720.10">
    <property type="entry name" value="endopeptidase domain like (from Nostoc punctiforme)"/>
    <property type="match status" value="1"/>
</dbReference>
<dbReference type="Gene3D" id="2.30.30.40">
    <property type="entry name" value="SH3 Domains"/>
    <property type="match status" value="1"/>
</dbReference>
<dbReference type="Gene3D" id="3.40.630.40">
    <property type="entry name" value="Zn-dependent exopeptidases"/>
    <property type="match status" value="1"/>
</dbReference>
<dbReference type="InterPro" id="IPR007921">
    <property type="entry name" value="CHAP_dom"/>
</dbReference>
<dbReference type="InterPro" id="IPR002508">
    <property type="entry name" value="MurNAc-LAA_cat"/>
</dbReference>
<dbReference type="InterPro" id="IPR050695">
    <property type="entry name" value="N-acetylmuramoyl_amidase_3"/>
</dbReference>
<dbReference type="InterPro" id="IPR038765">
    <property type="entry name" value="Papain-like_cys_pep_sf"/>
</dbReference>
<dbReference type="InterPro" id="IPR003646">
    <property type="entry name" value="SH3-like_bac-type"/>
</dbReference>
<dbReference type="PANTHER" id="PTHR30404:SF8">
    <property type="entry name" value="AUTOLYSIN PH-RELATED"/>
    <property type="match status" value="1"/>
</dbReference>
<dbReference type="PANTHER" id="PTHR30404">
    <property type="entry name" value="N-ACETYLMURAMOYL-L-ALANINE AMIDASE"/>
    <property type="match status" value="1"/>
</dbReference>
<dbReference type="Pfam" id="PF01520">
    <property type="entry name" value="Amidase_3"/>
    <property type="match status" value="1"/>
</dbReference>
<dbReference type="Pfam" id="PF05257">
    <property type="entry name" value="CHAP"/>
    <property type="match status" value="1"/>
</dbReference>
<dbReference type="Pfam" id="PF08460">
    <property type="entry name" value="SH3_5"/>
    <property type="match status" value="1"/>
</dbReference>
<dbReference type="SMART" id="SM00646">
    <property type="entry name" value="Ami_3"/>
    <property type="match status" value="1"/>
</dbReference>
<dbReference type="SMART" id="SM00287">
    <property type="entry name" value="SH3b"/>
    <property type="match status" value="1"/>
</dbReference>
<dbReference type="SUPFAM" id="SSF54001">
    <property type="entry name" value="Cysteine proteinases"/>
    <property type="match status" value="1"/>
</dbReference>
<dbReference type="SUPFAM" id="SSF53187">
    <property type="entry name" value="Zn-dependent exopeptidases"/>
    <property type="match status" value="1"/>
</dbReference>
<dbReference type="PROSITE" id="PS50911">
    <property type="entry name" value="CHAP"/>
    <property type="match status" value="1"/>
</dbReference>
<proteinExistence type="evidence at protein level"/>
<name>PH_STAA8</name>
<evidence type="ECO:0000255" key="1">
    <source>
        <dbReference type="PROSITE-ProRule" id="PRU00048"/>
    </source>
</evidence>
<evidence type="ECO:0000255" key="2">
    <source>
        <dbReference type="PROSITE-ProRule" id="PRU01117"/>
    </source>
</evidence>
<evidence type="ECO:0000269" key="3">
    <source>
    </source>
</evidence>
<evidence type="ECO:0000305" key="4"/>
<evidence type="ECO:0000305" key="5">
    <source>
    </source>
</evidence>
<evidence type="ECO:0000312" key="6">
    <source>
        <dbReference type="EMBL" id="ABD30597.1"/>
    </source>
</evidence>
<comment type="function">
    <text evidence="3">Has weak lytic activity toward S.aureus cells. Full-length protein has no activity, but fusion of the Peptidase C51 domain to the lysostaphin SH3 cell wall binding domain yields an active chimeric enzyme, suggesting that PH may be functional.</text>
</comment>
<comment type="catalytic activity">
    <reaction evidence="3">
        <text>Hydrolyzes the link between N-acetylmuramoyl residues and L-amino acid residues in certain cell-wall glycopeptides.</text>
        <dbReference type="EC" id="3.5.1.28"/>
    </reaction>
</comment>
<feature type="chain" id="PRO_0000445039" description="Probable autolysin PH">
    <location>
        <begin position="1"/>
        <end position="484"/>
    </location>
</feature>
<feature type="domain" description="Peptidase C51" evidence="1">
    <location>
        <begin position="5"/>
        <end position="148"/>
    </location>
</feature>
<feature type="domain" description="MurNAc-LAA" evidence="5">
    <location>
        <begin position="181"/>
        <end position="363"/>
    </location>
</feature>
<feature type="domain" description="SH3b" evidence="2">
    <location>
        <begin position="402"/>
        <end position="472"/>
    </location>
</feature>
<keyword id="KW-0929">Antimicrobial</keyword>
<keyword id="KW-0081">Bacteriolytic enzyme</keyword>
<keyword id="KW-0961">Cell wall biogenesis/degradation</keyword>
<keyword id="KW-0378">Hydrolase</keyword>
<keyword id="KW-1185">Reference proteome</keyword>
<accession>Q2FYD8</accession>
<reference key="1">
    <citation type="book" date="2006" name="Gram positive pathogens, 2nd edition">
        <title>The Staphylococcus aureus NCTC 8325 genome.</title>
        <editorList>
            <person name="Fischetti V."/>
            <person name="Novick R."/>
            <person name="Ferretti J."/>
            <person name="Portnoy D."/>
            <person name="Rood J."/>
        </editorList>
        <authorList>
            <person name="Gillaspy A.F."/>
            <person name="Worrell V."/>
            <person name="Orvis J."/>
            <person name="Roe B.A."/>
            <person name="Dyer D.W."/>
            <person name="Iandolo J.J."/>
        </authorList>
    </citation>
    <scope>NUCLEOTIDE SEQUENCE [LARGE SCALE GENOMIC DNA]</scope>
    <source>
        <strain>NCTC 8325 / PS 47</strain>
    </source>
</reference>
<reference key="2">
    <citation type="journal article" date="2015" name="Appl. Microbiol. Biotechnol.">
        <title>Discovery of novel S. aureus autolysins and molecular engineering to enhance bacteriolytic activity.</title>
        <authorList>
            <person name="Osipovitch D.C."/>
            <person name="Therrien S."/>
            <person name="Griswold K.E."/>
        </authorList>
    </citation>
    <scope>FUNCTION</scope>
    <scope>CATALYTIC ACTIVITY</scope>
    <source>
        <strain>ATCC 35556 / SA113</strain>
    </source>
</reference>
<sequence>MLITKNQAEKWFDNSLGKQFNPDLFYGFQCYDYANMFFMIATGERLQGLYAYNIPFDNKARIEKYGQIIKNYDSFLPQKLDIVVFPSKYGGGAGHVEIVESANLNTFTSFGQNWNGKGWTNGVAQPGWGPETVTRHVHYYDDPMYFIRLNFPDKVSVGDKAKSVIKQATAKKQAVIKPKKIMLVAGHGYNDPGAVGNGTNERDFIRKYITPNIAKYLRHAGHEVALYGGSSQSQDMYQDTAYGVNVGNNKDYGLYWVKSHGYDIVLEIHLDAAGESASGGHVIISSQFNADTIDKSIQDVIKNNLGQIRGVTPRNDLLNVNVSAEININYRLSELGFITNKNDMDWIKKNYDLYSKLIAGAIHGKPIGGLVAGNVKTSAKNQKNPPVPAGYTLDKNNVPYKKETGYYTVANVKGNNVRDGYSTNSRITGVLPNNATIKYDGAYCINGYRWITYIANSGQRRYIATGEVDKAGNRISSFGKFSTI</sequence>
<gene>
    <name evidence="6" type="ordered locus">SAOUHSC_01515</name>
</gene>